<sequence length="220" mass="23004">MKLNKYIDHTLLKQDAKKKQIDSLLSEAREYDFASVCVNPTWVEHAKKGLEGTDVKVCTVVGFPLGATTSAVKAFETKEAIQNGADEIDMVINVGALKSGNLALVESDIRAVVEASGDKLVKVIIEACLLTDQEKVVVCQLAQKAGADFVKTSTGFSTGGATIADVTLMRETVGSDMGVKAAGGARSYADALAFVEAGATRIGTSAGVAILKGELADGDY</sequence>
<protein>
    <recommendedName>
        <fullName evidence="1">Deoxyribose-phosphate aldolase</fullName>
        <shortName evidence="1">DERA</shortName>
        <ecNumber evidence="1">4.1.2.4</ecNumber>
    </recommendedName>
    <alternativeName>
        <fullName evidence="1">2-deoxy-D-ribose 5-phosphate aldolase</fullName>
    </alternativeName>
    <alternativeName>
        <fullName evidence="1">Phosphodeoxyriboaldolase</fullName>
        <shortName evidence="1">Deoxyriboaldolase</shortName>
    </alternativeName>
</protein>
<dbReference type="EC" id="4.1.2.4" evidence="1"/>
<dbReference type="EMBL" id="CP000920">
    <property type="protein sequence ID" value="ACO21981.1"/>
    <property type="molecule type" value="Genomic_DNA"/>
</dbReference>
<dbReference type="RefSeq" id="WP_000773677.1">
    <property type="nucleotide sequence ID" value="NC_012467.1"/>
</dbReference>
<dbReference type="SMR" id="C1CJT2"/>
<dbReference type="KEGG" id="spp:SPP_0849"/>
<dbReference type="HOGENOM" id="CLU_053595_0_0_9"/>
<dbReference type="UniPathway" id="UPA00002">
    <property type="reaction ID" value="UER00468"/>
</dbReference>
<dbReference type="GO" id="GO:0005737">
    <property type="term" value="C:cytoplasm"/>
    <property type="evidence" value="ECO:0007669"/>
    <property type="project" value="UniProtKB-SubCell"/>
</dbReference>
<dbReference type="GO" id="GO:0004139">
    <property type="term" value="F:deoxyribose-phosphate aldolase activity"/>
    <property type="evidence" value="ECO:0007669"/>
    <property type="project" value="UniProtKB-UniRule"/>
</dbReference>
<dbReference type="GO" id="GO:0006018">
    <property type="term" value="P:2-deoxyribose 1-phosphate catabolic process"/>
    <property type="evidence" value="ECO:0007669"/>
    <property type="project" value="UniProtKB-UniRule"/>
</dbReference>
<dbReference type="GO" id="GO:0016052">
    <property type="term" value="P:carbohydrate catabolic process"/>
    <property type="evidence" value="ECO:0007669"/>
    <property type="project" value="TreeGrafter"/>
</dbReference>
<dbReference type="GO" id="GO:0009264">
    <property type="term" value="P:deoxyribonucleotide catabolic process"/>
    <property type="evidence" value="ECO:0007669"/>
    <property type="project" value="InterPro"/>
</dbReference>
<dbReference type="CDD" id="cd00959">
    <property type="entry name" value="DeoC"/>
    <property type="match status" value="1"/>
</dbReference>
<dbReference type="FunFam" id="3.20.20.70:FF:000044">
    <property type="entry name" value="Deoxyribose-phosphate aldolase"/>
    <property type="match status" value="1"/>
</dbReference>
<dbReference type="Gene3D" id="3.20.20.70">
    <property type="entry name" value="Aldolase class I"/>
    <property type="match status" value="1"/>
</dbReference>
<dbReference type="HAMAP" id="MF_00114">
    <property type="entry name" value="DeoC_type1"/>
    <property type="match status" value="1"/>
</dbReference>
<dbReference type="InterPro" id="IPR013785">
    <property type="entry name" value="Aldolase_TIM"/>
</dbReference>
<dbReference type="InterPro" id="IPR011343">
    <property type="entry name" value="DeoC"/>
</dbReference>
<dbReference type="InterPro" id="IPR002915">
    <property type="entry name" value="DeoC/FbaB/LacD_aldolase"/>
</dbReference>
<dbReference type="InterPro" id="IPR028581">
    <property type="entry name" value="DeoC_typeI"/>
</dbReference>
<dbReference type="NCBIfam" id="TIGR00126">
    <property type="entry name" value="deoC"/>
    <property type="match status" value="1"/>
</dbReference>
<dbReference type="PANTHER" id="PTHR10889">
    <property type="entry name" value="DEOXYRIBOSE-PHOSPHATE ALDOLASE"/>
    <property type="match status" value="1"/>
</dbReference>
<dbReference type="PANTHER" id="PTHR10889:SF1">
    <property type="entry name" value="DEOXYRIBOSE-PHOSPHATE ALDOLASE"/>
    <property type="match status" value="1"/>
</dbReference>
<dbReference type="Pfam" id="PF01791">
    <property type="entry name" value="DeoC"/>
    <property type="match status" value="1"/>
</dbReference>
<dbReference type="PIRSF" id="PIRSF001357">
    <property type="entry name" value="DeoC"/>
    <property type="match status" value="1"/>
</dbReference>
<dbReference type="SMART" id="SM01133">
    <property type="entry name" value="DeoC"/>
    <property type="match status" value="1"/>
</dbReference>
<dbReference type="SUPFAM" id="SSF51569">
    <property type="entry name" value="Aldolase"/>
    <property type="match status" value="1"/>
</dbReference>
<reference key="1">
    <citation type="journal article" date="2010" name="Genome Biol.">
        <title>Structure and dynamics of the pan-genome of Streptococcus pneumoniae and closely related species.</title>
        <authorList>
            <person name="Donati C."/>
            <person name="Hiller N.L."/>
            <person name="Tettelin H."/>
            <person name="Muzzi A."/>
            <person name="Croucher N.J."/>
            <person name="Angiuoli S.V."/>
            <person name="Oggioni M."/>
            <person name="Dunning Hotopp J.C."/>
            <person name="Hu F.Z."/>
            <person name="Riley D.R."/>
            <person name="Covacci A."/>
            <person name="Mitchell T.J."/>
            <person name="Bentley S.D."/>
            <person name="Kilian M."/>
            <person name="Ehrlich G.D."/>
            <person name="Rappuoli R."/>
            <person name="Moxon E.R."/>
            <person name="Masignani V."/>
        </authorList>
    </citation>
    <scope>NUCLEOTIDE SEQUENCE [LARGE SCALE GENOMIC DNA]</scope>
    <source>
        <strain>P1031</strain>
    </source>
</reference>
<comment type="function">
    <text evidence="1">Catalyzes a reversible aldol reaction between acetaldehyde and D-glyceraldehyde 3-phosphate to generate 2-deoxy-D-ribose 5-phosphate.</text>
</comment>
<comment type="catalytic activity">
    <reaction evidence="1">
        <text>2-deoxy-D-ribose 5-phosphate = D-glyceraldehyde 3-phosphate + acetaldehyde</text>
        <dbReference type="Rhea" id="RHEA:12821"/>
        <dbReference type="ChEBI" id="CHEBI:15343"/>
        <dbReference type="ChEBI" id="CHEBI:59776"/>
        <dbReference type="ChEBI" id="CHEBI:62877"/>
        <dbReference type="EC" id="4.1.2.4"/>
    </reaction>
</comment>
<comment type="pathway">
    <text evidence="1">Carbohydrate degradation; 2-deoxy-D-ribose 1-phosphate degradation; D-glyceraldehyde 3-phosphate and acetaldehyde from 2-deoxy-alpha-D-ribose 1-phosphate: step 2/2.</text>
</comment>
<comment type="subcellular location">
    <subcellularLocation>
        <location evidence="1">Cytoplasm</location>
    </subcellularLocation>
</comment>
<comment type="similarity">
    <text evidence="1">Belongs to the DeoC/FbaB aldolase family. DeoC type 1 subfamily.</text>
</comment>
<name>DEOC_STRZP</name>
<accession>C1CJT2</accession>
<evidence type="ECO:0000255" key="1">
    <source>
        <dbReference type="HAMAP-Rule" id="MF_00114"/>
    </source>
</evidence>
<organism>
    <name type="scientific">Streptococcus pneumoniae (strain P1031)</name>
    <dbReference type="NCBI Taxonomy" id="488223"/>
    <lineage>
        <taxon>Bacteria</taxon>
        <taxon>Bacillati</taxon>
        <taxon>Bacillota</taxon>
        <taxon>Bacilli</taxon>
        <taxon>Lactobacillales</taxon>
        <taxon>Streptococcaceae</taxon>
        <taxon>Streptococcus</taxon>
    </lineage>
</organism>
<gene>
    <name evidence="1" type="primary">deoC</name>
    <name type="ordered locus">SPP_0849</name>
</gene>
<proteinExistence type="inferred from homology"/>
<keyword id="KW-0963">Cytoplasm</keyword>
<keyword id="KW-0456">Lyase</keyword>
<keyword id="KW-0704">Schiff base</keyword>
<feature type="chain" id="PRO_1000189837" description="Deoxyribose-phosphate aldolase">
    <location>
        <begin position="1"/>
        <end position="220"/>
    </location>
</feature>
<feature type="active site" description="Proton donor/acceptor" evidence="1">
    <location>
        <position position="89"/>
    </location>
</feature>
<feature type="active site" description="Schiff-base intermediate with acetaldehyde" evidence="1">
    <location>
        <position position="151"/>
    </location>
</feature>
<feature type="active site" description="Proton donor/acceptor" evidence="1">
    <location>
        <position position="180"/>
    </location>
</feature>